<sequence length="178" mass="19443">MDDTLNQANPSMSRRQLLNFFTGAIVATTASAAIYPATKFFMPPAESTDAEGGILAQDKIGHPIPASQILAQASGTRALIAGLAGEPTYLTVREDGTLDPMGIVNNCTHLGCTFPWNPVDQQFQCPCHGSRYDAQGSVERGPANRPLKLVQVQVKDDYIWISPWQETDPRTGEKPWWV</sequence>
<comment type="function">
    <text evidence="1">Component of the cytochrome b6-f complex, which mediates electron transfer between photosystem II (PSII) and photosystem I (PSI), cyclic electron flow around PSI, and state transitions.</text>
</comment>
<comment type="catalytic activity">
    <reaction evidence="1">
        <text>2 oxidized [plastocyanin] + a plastoquinol + 2 H(+)(in) = 2 reduced [plastocyanin] + a plastoquinone + 4 H(+)(out)</text>
        <dbReference type="Rhea" id="RHEA:22148"/>
        <dbReference type="Rhea" id="RHEA-COMP:9561"/>
        <dbReference type="Rhea" id="RHEA-COMP:9562"/>
        <dbReference type="Rhea" id="RHEA-COMP:10039"/>
        <dbReference type="Rhea" id="RHEA-COMP:10040"/>
        <dbReference type="ChEBI" id="CHEBI:15378"/>
        <dbReference type="ChEBI" id="CHEBI:17757"/>
        <dbReference type="ChEBI" id="CHEBI:29036"/>
        <dbReference type="ChEBI" id="CHEBI:49552"/>
        <dbReference type="ChEBI" id="CHEBI:62192"/>
        <dbReference type="EC" id="7.1.1.6"/>
    </reaction>
</comment>
<comment type="cofactor">
    <cofactor evidence="1">
        <name>[2Fe-2S] cluster</name>
        <dbReference type="ChEBI" id="CHEBI:190135"/>
    </cofactor>
    <text evidence="1">Binds 1 [2Fe-2S] cluster per subunit.</text>
</comment>
<comment type="subunit">
    <text evidence="1">The 4 large subunits of the cytochrome b6-f complex are cytochrome b6, subunit IV (17 kDa polypeptide, PetD), cytochrome f and the Rieske protein, while the 4 small subunits are PetG, PetL, PetM and PetN. The complex functions as a dimer.</text>
</comment>
<comment type="subcellular location">
    <subcellularLocation>
        <location evidence="1">Cellular thylakoid membrane</location>
        <topology evidence="1">Single-pass membrane protein</topology>
    </subcellularLocation>
    <text evidence="1">The transmembrane helix obliquely spans the membrane in one monomer, and its extrinsic C-terminal domain is part of the other monomer.</text>
</comment>
<comment type="miscellaneous">
    <text>The Rieske iron-sulfur protein is a high potential 2Fe-2S protein.</text>
</comment>
<comment type="similarity">
    <text evidence="1">Belongs to the Rieske iron-sulfur protein family.</text>
</comment>
<feature type="chain" id="PRO_0000127768" description="Cytochrome b6-f complex iron-sulfur subunit 2">
    <location>
        <begin position="1"/>
        <end position="178"/>
    </location>
</feature>
<feature type="transmembrane region" description="Helical" evidence="1">
    <location>
        <begin position="17"/>
        <end position="36"/>
    </location>
</feature>
<feature type="domain" description="Rieske" evidence="1">
    <location>
        <begin position="61"/>
        <end position="161"/>
    </location>
</feature>
<feature type="binding site" evidence="1">
    <location>
        <position position="107"/>
    </location>
    <ligand>
        <name>[2Fe-2S] cluster</name>
        <dbReference type="ChEBI" id="CHEBI:190135"/>
    </ligand>
</feature>
<feature type="binding site" evidence="1">
    <location>
        <position position="109"/>
    </location>
    <ligand>
        <name>[2Fe-2S] cluster</name>
        <dbReference type="ChEBI" id="CHEBI:190135"/>
    </ligand>
</feature>
<feature type="binding site" evidence="1">
    <location>
        <position position="125"/>
    </location>
    <ligand>
        <name>[2Fe-2S] cluster</name>
        <dbReference type="ChEBI" id="CHEBI:190135"/>
    </ligand>
</feature>
<feature type="binding site" evidence="1">
    <location>
        <position position="128"/>
    </location>
    <ligand>
        <name>[2Fe-2S] cluster</name>
        <dbReference type="ChEBI" id="CHEBI:190135"/>
    </ligand>
</feature>
<feature type="disulfide bond" evidence="1">
    <location>
        <begin position="112"/>
        <end position="127"/>
    </location>
</feature>
<evidence type="ECO:0000255" key="1">
    <source>
        <dbReference type="HAMAP-Rule" id="MF_01335"/>
    </source>
</evidence>
<keyword id="KW-0001">2Fe-2S</keyword>
<keyword id="KW-1015">Disulfide bond</keyword>
<keyword id="KW-0249">Electron transport</keyword>
<keyword id="KW-0408">Iron</keyword>
<keyword id="KW-0411">Iron-sulfur</keyword>
<keyword id="KW-0472">Membrane</keyword>
<keyword id="KW-0479">Metal-binding</keyword>
<keyword id="KW-1185">Reference proteome</keyword>
<keyword id="KW-0793">Thylakoid</keyword>
<keyword id="KW-1278">Translocase</keyword>
<keyword id="KW-0812">Transmembrane</keyword>
<keyword id="KW-1133">Transmembrane helix</keyword>
<keyword id="KW-0813">Transport</keyword>
<protein>
    <recommendedName>
        <fullName evidence="1">Cytochrome b6-f complex iron-sulfur subunit 2</fullName>
        <ecNumber evidence="1">7.1.1.6</ecNumber>
    </recommendedName>
    <alternativeName>
        <fullName evidence="1">Plastohydroquinone:plastocyanin oxidoreductase iron-sulfur protein 2</fullName>
        <shortName evidence="1">ISP 2</shortName>
        <shortName evidence="1">RISP 2</shortName>
    </alternativeName>
    <alternativeName>
        <fullName evidence="1">Rieske iron-sulfur protein 2</fullName>
    </alternativeName>
</protein>
<name>UCRIB_NOSS1</name>
<accession>Q93SW8</accession>
<reference key="1">
    <citation type="submission" date="2001-05" db="EMBL/GenBank/DDBJ databases">
        <title>b6f complex of Anabaena sp; possible function of alternative Rieske-FeS proteins.</title>
        <authorList>
            <person name="Arnold M."/>
        </authorList>
    </citation>
    <scope>NUCLEOTIDE SEQUENCE [GENOMIC DNA]</scope>
</reference>
<reference key="2">
    <citation type="journal article" date="2001" name="DNA Res.">
        <title>Complete genomic sequence of the filamentous nitrogen-fixing cyanobacterium Anabaena sp. strain PCC 7120.</title>
        <authorList>
            <person name="Kaneko T."/>
            <person name="Nakamura Y."/>
            <person name="Wolk C.P."/>
            <person name="Kuritz T."/>
            <person name="Sasamoto S."/>
            <person name="Watanabe A."/>
            <person name="Iriguchi M."/>
            <person name="Ishikawa A."/>
            <person name="Kawashima K."/>
            <person name="Kimura T."/>
            <person name="Kishida Y."/>
            <person name="Kohara M."/>
            <person name="Matsumoto M."/>
            <person name="Matsuno A."/>
            <person name="Muraki A."/>
            <person name="Nakazaki N."/>
            <person name="Shimpo S."/>
            <person name="Sugimoto M."/>
            <person name="Takazawa M."/>
            <person name="Yamada M."/>
            <person name="Yasuda M."/>
            <person name="Tabata S."/>
        </authorList>
    </citation>
    <scope>NUCLEOTIDE SEQUENCE [LARGE SCALE GENOMIC DNA]</scope>
    <source>
        <strain>PCC 7120 / SAG 25.82 / UTEX 2576</strain>
    </source>
</reference>
<gene>
    <name evidence="1" type="primary">petC2</name>
    <name type="ordered locus">all4511</name>
</gene>
<proteinExistence type="inferred from homology"/>
<organism>
    <name type="scientific">Nostoc sp. (strain PCC 7120 / SAG 25.82 / UTEX 2576)</name>
    <dbReference type="NCBI Taxonomy" id="103690"/>
    <lineage>
        <taxon>Bacteria</taxon>
        <taxon>Bacillati</taxon>
        <taxon>Cyanobacteriota</taxon>
        <taxon>Cyanophyceae</taxon>
        <taxon>Nostocales</taxon>
        <taxon>Nostocaceae</taxon>
        <taxon>Nostoc</taxon>
    </lineage>
</organism>
<dbReference type="EC" id="7.1.1.6" evidence="1"/>
<dbReference type="EMBL" id="AJ319647">
    <property type="protein sequence ID" value="CAC39606.1"/>
    <property type="molecule type" value="Genomic_DNA"/>
</dbReference>
<dbReference type="EMBL" id="BA000019">
    <property type="protein sequence ID" value="BAB76210.1"/>
    <property type="molecule type" value="Genomic_DNA"/>
</dbReference>
<dbReference type="PIR" id="AG2369">
    <property type="entry name" value="AG2369"/>
</dbReference>
<dbReference type="SMR" id="Q93SW8"/>
<dbReference type="STRING" id="103690.gene:10496560"/>
<dbReference type="TCDB" id="3.D.3.5.6">
    <property type="family name" value="the proton-translocating quinol:cytochrome c reductase (qcr) superfamily"/>
</dbReference>
<dbReference type="KEGG" id="ana:all4511"/>
<dbReference type="eggNOG" id="COG0723">
    <property type="taxonomic scope" value="Bacteria"/>
</dbReference>
<dbReference type="OrthoDB" id="9767869at2"/>
<dbReference type="Proteomes" id="UP000002483">
    <property type="component" value="Chromosome"/>
</dbReference>
<dbReference type="GO" id="GO:0031676">
    <property type="term" value="C:plasma membrane-derived thylakoid membrane"/>
    <property type="evidence" value="ECO:0007669"/>
    <property type="project" value="UniProtKB-SubCell"/>
</dbReference>
<dbReference type="GO" id="GO:0051537">
    <property type="term" value="F:2 iron, 2 sulfur cluster binding"/>
    <property type="evidence" value="ECO:0007669"/>
    <property type="project" value="UniProtKB-KW"/>
</dbReference>
<dbReference type="GO" id="GO:0045158">
    <property type="term" value="F:electron transporter, transferring electrons within cytochrome b6/f complex of photosystem II activity"/>
    <property type="evidence" value="ECO:0007669"/>
    <property type="project" value="UniProtKB-UniRule"/>
</dbReference>
<dbReference type="GO" id="GO:0046872">
    <property type="term" value="F:metal ion binding"/>
    <property type="evidence" value="ECO:0007669"/>
    <property type="project" value="UniProtKB-KW"/>
</dbReference>
<dbReference type="GO" id="GO:0004497">
    <property type="term" value="F:monooxygenase activity"/>
    <property type="evidence" value="ECO:0007669"/>
    <property type="project" value="UniProtKB-ARBA"/>
</dbReference>
<dbReference type="GO" id="GO:0016705">
    <property type="term" value="F:oxidoreductase activity, acting on paired donors, with incorporation or reduction of molecular oxygen"/>
    <property type="evidence" value="ECO:0007669"/>
    <property type="project" value="UniProtKB-ARBA"/>
</dbReference>
<dbReference type="GO" id="GO:0009496">
    <property type="term" value="F:plastoquinol--plastocyanin reductase activity"/>
    <property type="evidence" value="ECO:0007669"/>
    <property type="project" value="UniProtKB-UniRule"/>
</dbReference>
<dbReference type="GO" id="GO:0015979">
    <property type="term" value="P:photosynthesis"/>
    <property type="evidence" value="ECO:0007669"/>
    <property type="project" value="UniProtKB-UniRule"/>
</dbReference>
<dbReference type="CDD" id="cd03471">
    <property type="entry name" value="Rieske_cytochrome_b6f"/>
    <property type="match status" value="1"/>
</dbReference>
<dbReference type="Gene3D" id="2.102.10.10">
    <property type="entry name" value="Rieske [2Fe-2S] iron-sulphur domain"/>
    <property type="match status" value="1"/>
</dbReference>
<dbReference type="Gene3D" id="1.20.5.700">
    <property type="entry name" value="Single helix bin"/>
    <property type="match status" value="1"/>
</dbReference>
<dbReference type="HAMAP" id="MF_01335">
    <property type="entry name" value="Cytb6_f_Rieske"/>
    <property type="match status" value="1"/>
</dbReference>
<dbReference type="InterPro" id="IPR023960">
    <property type="entry name" value="Cyt_b6_f_Rieske"/>
</dbReference>
<dbReference type="InterPro" id="IPR017941">
    <property type="entry name" value="Rieske_2Fe-2S"/>
</dbReference>
<dbReference type="InterPro" id="IPR036922">
    <property type="entry name" value="Rieske_2Fe-2S_sf"/>
</dbReference>
<dbReference type="InterPro" id="IPR014349">
    <property type="entry name" value="Rieske_Fe-S_prot"/>
</dbReference>
<dbReference type="InterPro" id="IPR005805">
    <property type="entry name" value="Rieske_Fe-S_prot_C"/>
</dbReference>
<dbReference type="InterPro" id="IPR006311">
    <property type="entry name" value="TAT_signal"/>
</dbReference>
<dbReference type="NCBIfam" id="NF045928">
    <property type="entry name" value="Cytb6fFeSPetC"/>
    <property type="match status" value="1"/>
</dbReference>
<dbReference type="NCBIfam" id="NF010001">
    <property type="entry name" value="PRK13474.1"/>
    <property type="match status" value="1"/>
</dbReference>
<dbReference type="PANTHER" id="PTHR10134">
    <property type="entry name" value="CYTOCHROME B-C1 COMPLEX SUBUNIT RIESKE, MITOCHONDRIAL"/>
    <property type="match status" value="1"/>
</dbReference>
<dbReference type="Pfam" id="PF00355">
    <property type="entry name" value="Rieske"/>
    <property type="match status" value="1"/>
</dbReference>
<dbReference type="Pfam" id="PF25471">
    <property type="entry name" value="TM_PetC"/>
    <property type="match status" value="1"/>
</dbReference>
<dbReference type="PRINTS" id="PR00162">
    <property type="entry name" value="RIESKE"/>
</dbReference>
<dbReference type="SUPFAM" id="SSF50022">
    <property type="entry name" value="ISP domain"/>
    <property type="match status" value="1"/>
</dbReference>
<dbReference type="PROSITE" id="PS51296">
    <property type="entry name" value="RIESKE"/>
    <property type="match status" value="1"/>
</dbReference>
<dbReference type="PROSITE" id="PS51318">
    <property type="entry name" value="TAT"/>
    <property type="match status" value="1"/>
</dbReference>